<evidence type="ECO:0000255" key="1">
    <source>
        <dbReference type="HAMAP-Rule" id="MF_01159"/>
    </source>
</evidence>
<proteinExistence type="inferred from homology"/>
<organism>
    <name type="scientific">Listeria welshimeri serovar 6b (strain ATCC 35897 / DSM 20650 / CCUG 15529 / CIP 8149 / NCTC 11857 / SLCC 5334 / V8)</name>
    <dbReference type="NCBI Taxonomy" id="386043"/>
    <lineage>
        <taxon>Bacteria</taxon>
        <taxon>Bacillati</taxon>
        <taxon>Bacillota</taxon>
        <taxon>Bacilli</taxon>
        <taxon>Bacillales</taxon>
        <taxon>Listeriaceae</taxon>
        <taxon>Listeria</taxon>
    </lineage>
</organism>
<feature type="chain" id="PRO_1000065582" description="Replication initiation control protein YabA">
    <location>
        <begin position="1"/>
        <end position="129"/>
    </location>
</feature>
<feature type="binding site" evidence="1">
    <location>
        <position position="103"/>
    </location>
    <ligand>
        <name>Zn(2+)</name>
        <dbReference type="ChEBI" id="CHEBI:29105"/>
    </ligand>
</feature>
<feature type="binding site" evidence="1">
    <location>
        <position position="105"/>
    </location>
    <ligand>
        <name>Zn(2+)</name>
        <dbReference type="ChEBI" id="CHEBI:29105"/>
    </ligand>
</feature>
<feature type="binding site" evidence="1">
    <location>
        <position position="119"/>
    </location>
    <ligand>
        <name>Zn(2+)</name>
        <dbReference type="ChEBI" id="CHEBI:29105"/>
    </ligand>
</feature>
<feature type="binding site" evidence="1">
    <location>
        <position position="122"/>
    </location>
    <ligand>
        <name>Zn(2+)</name>
        <dbReference type="ChEBI" id="CHEBI:29105"/>
    </ligand>
</feature>
<name>YABA_LISW6</name>
<keyword id="KW-0963">Cytoplasm</keyword>
<keyword id="KW-0235">DNA replication</keyword>
<keyword id="KW-0236">DNA replication inhibitor</keyword>
<keyword id="KW-0479">Metal-binding</keyword>
<keyword id="KW-0862">Zinc</keyword>
<comment type="function">
    <text evidence="1">Involved in control of chromosome replication initiation. Inhibits the cooperative binding of DnaA to the oriC region, thus negatively regulating initiation of chromosome replication. Inhibits the ability of DnaA-ATP to form a helix on DNA; does not disassemble preformed DnaA-DNA helices. Decreases the residence time of DnaA on the chromosome at its binding sites (oriC, replication forks and promoter-binding sites). Tethers DnaA to the replication machinery via the DNA polymerase beta sliding clamp subunit (dnaN). Associates with oriC and other DnaA targets on the chromosome in a DnaA-dependent manner.</text>
</comment>
<comment type="cofactor">
    <cofactor evidence="1">
        <name>Zn(2+)</name>
        <dbReference type="ChEBI" id="CHEBI:29105"/>
    </cofactor>
    <text evidence="1">Binds 1 zinc ion per subunit.</text>
</comment>
<comment type="subunit">
    <text evidence="1">Homotetramer. Interacts with both DnaA and DnaN, acting as a bridge between these two proteins.</text>
</comment>
<comment type="subcellular location">
    <subcellularLocation>
        <location evidence="1">Cytoplasm</location>
        <location evidence="1">Nucleoid</location>
    </subcellularLocation>
    <text evidence="1">Localizes in tight foci, which correspond to the replisome at mid-cell throughout the cell cycle.</text>
</comment>
<comment type="similarity">
    <text evidence="1">Belongs to the YabA family.</text>
</comment>
<reference key="1">
    <citation type="journal article" date="2006" name="J. Bacteriol.">
        <title>Whole-genome sequence of Listeria welshimeri reveals common steps in genome reduction with Listeria innocua as compared to Listeria monocytogenes.</title>
        <authorList>
            <person name="Hain T."/>
            <person name="Steinweg C."/>
            <person name="Kuenne C.T."/>
            <person name="Billion A."/>
            <person name="Ghai R."/>
            <person name="Chatterjee S.S."/>
            <person name="Domann E."/>
            <person name="Kaerst U."/>
            <person name="Goesmann A."/>
            <person name="Bekel T."/>
            <person name="Bartels D."/>
            <person name="Kaiser O."/>
            <person name="Meyer F."/>
            <person name="Puehler A."/>
            <person name="Weisshaar B."/>
            <person name="Wehland J."/>
            <person name="Liang C."/>
            <person name="Dandekar T."/>
            <person name="Lampidis R."/>
            <person name="Kreft J."/>
            <person name="Goebel W."/>
            <person name="Chakraborty T."/>
        </authorList>
    </citation>
    <scope>NUCLEOTIDE SEQUENCE [LARGE SCALE GENOMIC DNA]</scope>
    <source>
        <strain>ATCC 35897 / DSM 20650 / CCUG 15529 / CIP 8149 / NCTC 11857 / SLCC 5334 / V8</strain>
    </source>
</reference>
<gene>
    <name evidence="1" type="primary">yabA</name>
    <name type="ordered locus">lwe0145</name>
</gene>
<sequence>MDKKAIFDSVSNMEEQIGELYQQLGDLKTNLGEMLEENNRLNLENEHLRRRLSLTDEGTLEPVAEEEAVHGVMAPNRKEAMQQMIELGEGYDNLVQLYKEGFHVCNVHFGSPRGNDEDCLFCLSLLNKK</sequence>
<protein>
    <recommendedName>
        <fullName evidence="1">Replication initiation control protein YabA</fullName>
    </recommendedName>
</protein>
<dbReference type="EMBL" id="AM263198">
    <property type="protein sequence ID" value="CAK19563.1"/>
    <property type="molecule type" value="Genomic_DNA"/>
</dbReference>
<dbReference type="RefSeq" id="WP_011701014.1">
    <property type="nucleotide sequence ID" value="NC_008555.1"/>
</dbReference>
<dbReference type="SMR" id="A0AEY1"/>
<dbReference type="STRING" id="386043.lwe0145"/>
<dbReference type="GeneID" id="61188025"/>
<dbReference type="KEGG" id="lwe:lwe0145"/>
<dbReference type="eggNOG" id="COG4467">
    <property type="taxonomic scope" value="Bacteria"/>
</dbReference>
<dbReference type="HOGENOM" id="CLU_157169_0_0_9"/>
<dbReference type="OrthoDB" id="2112130at2"/>
<dbReference type="Proteomes" id="UP000000779">
    <property type="component" value="Chromosome"/>
</dbReference>
<dbReference type="GO" id="GO:0009295">
    <property type="term" value="C:nucleoid"/>
    <property type="evidence" value="ECO:0007669"/>
    <property type="project" value="UniProtKB-SubCell"/>
</dbReference>
<dbReference type="GO" id="GO:0006260">
    <property type="term" value="P:DNA replication"/>
    <property type="evidence" value="ECO:0007669"/>
    <property type="project" value="UniProtKB-UniRule"/>
</dbReference>
<dbReference type="HAMAP" id="MF_01159">
    <property type="entry name" value="YabA"/>
    <property type="match status" value="1"/>
</dbReference>
<dbReference type="InterPro" id="IPR010377">
    <property type="entry name" value="YabA"/>
</dbReference>
<dbReference type="NCBIfam" id="NF009643">
    <property type="entry name" value="PRK13169.1-4"/>
    <property type="match status" value="1"/>
</dbReference>
<dbReference type="NCBIfam" id="NF009644">
    <property type="entry name" value="PRK13169.1-5"/>
    <property type="match status" value="1"/>
</dbReference>
<dbReference type="Pfam" id="PF06156">
    <property type="entry name" value="YabA"/>
    <property type="match status" value="1"/>
</dbReference>
<dbReference type="PIRSF" id="PIRSF021439">
    <property type="entry name" value="DUF972"/>
    <property type="match status" value="1"/>
</dbReference>
<accession>A0AEY1</accession>